<organism>
    <name type="scientific">Rattus norvegicus</name>
    <name type="common">Rat</name>
    <dbReference type="NCBI Taxonomy" id="10116"/>
    <lineage>
        <taxon>Eukaryota</taxon>
        <taxon>Metazoa</taxon>
        <taxon>Chordata</taxon>
        <taxon>Craniata</taxon>
        <taxon>Vertebrata</taxon>
        <taxon>Euteleostomi</taxon>
        <taxon>Mammalia</taxon>
        <taxon>Eutheria</taxon>
        <taxon>Euarchontoglires</taxon>
        <taxon>Glires</taxon>
        <taxon>Rodentia</taxon>
        <taxon>Myomorpha</taxon>
        <taxon>Muroidea</taxon>
        <taxon>Muridae</taxon>
        <taxon>Murinae</taxon>
        <taxon>Rattus</taxon>
    </lineage>
</organism>
<dbReference type="EMBL" id="BC059155">
    <property type="protein sequence ID" value="AAH59155.1"/>
    <property type="molecule type" value="mRNA"/>
</dbReference>
<dbReference type="RefSeq" id="NP_942040.1">
    <property type="nucleotide sequence ID" value="NM_198745.2"/>
</dbReference>
<dbReference type="PDB" id="6VQ6">
    <property type="method" value="EM"/>
    <property type="resolution" value="3.90 A"/>
    <property type="chains" value="I/J/K=1-226"/>
</dbReference>
<dbReference type="PDB" id="6VQ7">
    <property type="method" value="EM"/>
    <property type="resolution" value="4.00 A"/>
    <property type="chains" value="I/J/K=1-226"/>
</dbReference>
<dbReference type="PDB" id="6VQ8">
    <property type="method" value="EM"/>
    <property type="resolution" value="3.90 A"/>
    <property type="chains" value="I/J/K=1-226"/>
</dbReference>
<dbReference type="PDB" id="6VQ9">
    <property type="method" value="EM"/>
    <property type="resolution" value="3.60 A"/>
    <property type="chains" value="I/J/K=1-226"/>
</dbReference>
<dbReference type="PDB" id="6VQA">
    <property type="method" value="EM"/>
    <property type="resolution" value="3.70 A"/>
    <property type="chains" value="I/J/K=1-226"/>
</dbReference>
<dbReference type="PDB" id="6VQB">
    <property type="method" value="EM"/>
    <property type="resolution" value="3.60 A"/>
    <property type="chains" value="I/J/K=1-226"/>
</dbReference>
<dbReference type="PDB" id="6VQI">
    <property type="method" value="EM"/>
    <property type="resolution" value="4.30 A"/>
    <property type="chains" value="I/J/K=1-226"/>
</dbReference>
<dbReference type="PDB" id="6VQJ">
    <property type="method" value="EM"/>
    <property type="resolution" value="5.70 A"/>
    <property type="chains" value="I/J/K=1-226"/>
</dbReference>
<dbReference type="PDB" id="6VQK">
    <property type="method" value="EM"/>
    <property type="resolution" value="5.70 A"/>
    <property type="chains" value="I/J/K=1-226"/>
</dbReference>
<dbReference type="PDB" id="7UZF">
    <property type="method" value="EM"/>
    <property type="resolution" value="3.80 A"/>
    <property type="chains" value="I/J/K=1-226"/>
</dbReference>
<dbReference type="PDB" id="7UZG">
    <property type="method" value="EM"/>
    <property type="resolution" value="3.70 A"/>
    <property type="chains" value="I/J/K=1-226"/>
</dbReference>
<dbReference type="PDB" id="7UZH">
    <property type="method" value="EM"/>
    <property type="resolution" value="3.80 A"/>
    <property type="chains" value="I/J/K=1-226"/>
</dbReference>
<dbReference type="PDB" id="7UZI">
    <property type="method" value="EM"/>
    <property type="resolution" value="3.90 A"/>
    <property type="chains" value="I/J/K=1-226"/>
</dbReference>
<dbReference type="PDB" id="7UZJ">
    <property type="method" value="EM"/>
    <property type="resolution" value="3.30 A"/>
    <property type="chains" value="I/J/K=1-226"/>
</dbReference>
<dbReference type="PDB" id="7UZK">
    <property type="method" value="EM"/>
    <property type="resolution" value="3.00 A"/>
    <property type="chains" value="I/J/K=1-226"/>
</dbReference>
<dbReference type="PDB" id="9B8P">
    <property type="method" value="EM"/>
    <property type="resolution" value="3.20 A"/>
    <property type="chains" value="I/J/K=1-226"/>
</dbReference>
<dbReference type="PDB" id="9B8Q">
    <property type="method" value="EM"/>
    <property type="resolution" value="3.80 A"/>
    <property type="chains" value="I/J/K=1-226"/>
</dbReference>
<dbReference type="PDB" id="9BRB">
    <property type="method" value="EM"/>
    <property type="resolution" value="3.60 A"/>
    <property type="chains" value="I/J/K=1-226"/>
</dbReference>
<dbReference type="PDB" id="9BRC">
    <property type="method" value="EM"/>
    <property type="resolution" value="3.90 A"/>
    <property type="chains" value="I/J/K=1-226"/>
</dbReference>
<dbReference type="PDB" id="9BRD">
    <property type="method" value="EM"/>
    <property type="resolution" value="3.50 A"/>
    <property type="chains" value="I/J/K=1-226"/>
</dbReference>
<dbReference type="PDBsum" id="6VQ6"/>
<dbReference type="PDBsum" id="6VQ7"/>
<dbReference type="PDBsum" id="6VQ8"/>
<dbReference type="PDBsum" id="6VQ9"/>
<dbReference type="PDBsum" id="6VQA"/>
<dbReference type="PDBsum" id="6VQB"/>
<dbReference type="PDBsum" id="6VQI"/>
<dbReference type="PDBsum" id="6VQJ"/>
<dbReference type="PDBsum" id="6VQK"/>
<dbReference type="PDBsum" id="7UZF"/>
<dbReference type="PDBsum" id="7UZG"/>
<dbReference type="PDBsum" id="7UZH"/>
<dbReference type="PDBsum" id="7UZI"/>
<dbReference type="PDBsum" id="7UZJ"/>
<dbReference type="PDBsum" id="7UZK"/>
<dbReference type="PDBsum" id="9B8P"/>
<dbReference type="PDBsum" id="9B8Q"/>
<dbReference type="PDBsum" id="9BRB"/>
<dbReference type="PDBsum" id="9BRC"/>
<dbReference type="PDBsum" id="9BRD"/>
<dbReference type="EMDB" id="EMD-21345"/>
<dbReference type="EMDB" id="EMD-21346"/>
<dbReference type="EMDB" id="EMD-21347"/>
<dbReference type="EMDB" id="EMD-21351"/>
<dbReference type="EMDB" id="EMD-21352"/>
<dbReference type="EMDB" id="EMD-21353"/>
<dbReference type="EMDB" id="EMD-26909"/>
<dbReference type="EMDB" id="EMD-26910"/>
<dbReference type="EMDB" id="EMD-26911"/>
<dbReference type="EMDB" id="EMD-26912"/>
<dbReference type="EMDB" id="EMD-26913"/>
<dbReference type="EMDB" id="EMD-26914"/>
<dbReference type="EMDB" id="EMD-44351"/>
<dbReference type="EMDB" id="EMD-44352"/>
<dbReference type="SMR" id="Q6PCU2"/>
<dbReference type="BioGRID" id="255610">
    <property type="interactions" value="3"/>
</dbReference>
<dbReference type="CORUM" id="Q6PCU2"/>
<dbReference type="FunCoup" id="Q6PCU2">
    <property type="interactions" value="2724"/>
</dbReference>
<dbReference type="IntAct" id="Q6PCU2">
    <property type="interactions" value="7"/>
</dbReference>
<dbReference type="MINT" id="Q6PCU2"/>
<dbReference type="STRING" id="10116.ENSRNOP00000016495"/>
<dbReference type="iPTMnet" id="Q6PCU2"/>
<dbReference type="PhosphoSitePlus" id="Q6PCU2"/>
<dbReference type="SwissPalm" id="Q6PCU2"/>
<dbReference type="jPOST" id="Q6PCU2"/>
<dbReference type="PaxDb" id="10116-ENSRNOP00000016495"/>
<dbReference type="GeneID" id="297566"/>
<dbReference type="KEGG" id="rno:297566"/>
<dbReference type="UCSC" id="RGD:735157">
    <property type="organism name" value="rat"/>
</dbReference>
<dbReference type="AGR" id="RGD:735157"/>
<dbReference type="CTD" id="529"/>
<dbReference type="RGD" id="735157">
    <property type="gene designation" value="Atp6v1e1"/>
</dbReference>
<dbReference type="eggNOG" id="KOG1664">
    <property type="taxonomic scope" value="Eukaryota"/>
</dbReference>
<dbReference type="InParanoid" id="Q6PCU2"/>
<dbReference type="PhylomeDB" id="Q6PCU2"/>
<dbReference type="Reactome" id="R-RNO-1222556">
    <property type="pathway name" value="ROS and RNS production in phagocytes"/>
</dbReference>
<dbReference type="Reactome" id="R-RNO-77387">
    <property type="pathway name" value="Insulin receptor recycling"/>
</dbReference>
<dbReference type="Reactome" id="R-RNO-917977">
    <property type="pathway name" value="Transferrin endocytosis and recycling"/>
</dbReference>
<dbReference type="Reactome" id="R-RNO-9639288">
    <property type="pathway name" value="Amino acids regulate mTORC1"/>
</dbReference>
<dbReference type="Reactome" id="R-RNO-983712">
    <property type="pathway name" value="Ion channel transport"/>
</dbReference>
<dbReference type="PRO" id="PR:Q6PCU2"/>
<dbReference type="Proteomes" id="UP000002494">
    <property type="component" value="Unplaced"/>
</dbReference>
<dbReference type="GO" id="GO:0016324">
    <property type="term" value="C:apical plasma membrane"/>
    <property type="evidence" value="ECO:0000250"/>
    <property type="project" value="UniProtKB"/>
</dbReference>
<dbReference type="GO" id="GO:0030665">
    <property type="term" value="C:clathrin-coated vesicle membrane"/>
    <property type="evidence" value="ECO:0007669"/>
    <property type="project" value="UniProtKB-SubCell"/>
</dbReference>
<dbReference type="GO" id="GO:0005737">
    <property type="term" value="C:cytoplasm"/>
    <property type="evidence" value="ECO:0000266"/>
    <property type="project" value="RGD"/>
</dbReference>
<dbReference type="GO" id="GO:0005829">
    <property type="term" value="C:cytosol"/>
    <property type="evidence" value="ECO:0000250"/>
    <property type="project" value="UniProtKB"/>
</dbReference>
<dbReference type="GO" id="GO:0005768">
    <property type="term" value="C:endosome"/>
    <property type="evidence" value="ECO:0000250"/>
    <property type="project" value="UniProtKB"/>
</dbReference>
<dbReference type="GO" id="GO:0098850">
    <property type="term" value="C:extrinsic component of synaptic vesicle membrane"/>
    <property type="evidence" value="ECO:0000314"/>
    <property type="project" value="SynGO"/>
</dbReference>
<dbReference type="GO" id="GO:0005902">
    <property type="term" value="C:microvillus"/>
    <property type="evidence" value="ECO:0000266"/>
    <property type="project" value="RGD"/>
</dbReference>
<dbReference type="GO" id="GO:0000221">
    <property type="term" value="C:vacuolar proton-transporting V-type ATPase, V1 domain"/>
    <property type="evidence" value="ECO:0000314"/>
    <property type="project" value="UniProtKB"/>
</dbReference>
<dbReference type="GO" id="GO:0051117">
    <property type="term" value="F:ATPase binding"/>
    <property type="evidence" value="ECO:0000266"/>
    <property type="project" value="RGD"/>
</dbReference>
<dbReference type="GO" id="GO:0046961">
    <property type="term" value="F:proton-transporting ATPase activity, rotational mechanism"/>
    <property type="evidence" value="ECO:0000266"/>
    <property type="project" value="RGD"/>
</dbReference>
<dbReference type="GO" id="GO:1902600">
    <property type="term" value="P:proton transmembrane transport"/>
    <property type="evidence" value="ECO:0000266"/>
    <property type="project" value="RGD"/>
</dbReference>
<dbReference type="GO" id="GO:0097401">
    <property type="term" value="P:synaptic vesicle lumen acidification"/>
    <property type="evidence" value="ECO:0000266"/>
    <property type="project" value="RGD"/>
</dbReference>
<dbReference type="FunFam" id="3.30.2320.30:FF:000001">
    <property type="entry name" value="V-type proton atpase subunit e 1"/>
    <property type="match status" value="1"/>
</dbReference>
<dbReference type="Gene3D" id="6.10.250.1620">
    <property type="match status" value="1"/>
</dbReference>
<dbReference type="Gene3D" id="3.30.2320.30">
    <property type="entry name" value="ATP synthase, E subunit, C-terminal"/>
    <property type="match status" value="1"/>
</dbReference>
<dbReference type="HAMAP" id="MF_00311">
    <property type="entry name" value="ATP_synth_E_arch"/>
    <property type="match status" value="1"/>
</dbReference>
<dbReference type="InterPro" id="IPR038495">
    <property type="entry name" value="ATPase_E_C"/>
</dbReference>
<dbReference type="InterPro" id="IPR002842">
    <property type="entry name" value="ATPase_V1_Esu"/>
</dbReference>
<dbReference type="PANTHER" id="PTHR45715">
    <property type="entry name" value="ATPASE H+-TRANSPORTING V1 SUBUNIT E1A-RELATED"/>
    <property type="match status" value="1"/>
</dbReference>
<dbReference type="Pfam" id="PF01991">
    <property type="entry name" value="vATP-synt_E"/>
    <property type="match status" value="1"/>
</dbReference>
<dbReference type="SUPFAM" id="SSF160527">
    <property type="entry name" value="V-type ATPase subunit E-like"/>
    <property type="match status" value="1"/>
</dbReference>
<proteinExistence type="evidence at protein level"/>
<gene>
    <name type="primary">Atp6v1e1</name>
</gene>
<protein>
    <recommendedName>
        <fullName>V-type proton ATPase subunit E 1</fullName>
        <shortName>V-ATPase subunit E 1</shortName>
    </recommendedName>
    <alternativeName>
        <fullName>Vacuolar proton pump subunit E 1</fullName>
    </alternativeName>
</protein>
<sequence>MALSDADVQKQIKHMMAFIEQEANEKAEEIDAKAEEEFNIEKGRLVQTQRLKIMEYYEKKEKQIEQQKKIQMSNLMNQARLKVLRARDDLITDLLNEAKQRLSKVVKDTTRYQVLLDGLVLQGLYQLLEPRMIVRCRKQDFPLVKAAVQKAIPMYKIATKKDVDVQIDLEAYLPEDIAGGVEIYNGDRKIKVSNTLESRLDLIAQQMMPEVRGALFGANANRKFLD</sequence>
<name>VATE1_RAT</name>
<evidence type="ECO:0000250" key="1">
    <source>
        <dbReference type="UniProtKB" id="P36543"/>
    </source>
</evidence>
<evidence type="ECO:0000250" key="2">
    <source>
        <dbReference type="UniProtKB" id="P50518"/>
    </source>
</evidence>
<evidence type="ECO:0000269" key="3">
    <source>
    </source>
</evidence>
<evidence type="ECO:0000305" key="4"/>
<evidence type="ECO:0007744" key="5">
    <source>
        <dbReference type="PDB" id="6VQ6"/>
    </source>
</evidence>
<evidence type="ECO:0007744" key="6">
    <source>
        <dbReference type="PDB" id="6VQ7"/>
    </source>
</evidence>
<evidence type="ECO:0007744" key="7">
    <source>
        <dbReference type="PDB" id="6VQ8"/>
    </source>
</evidence>
<evidence type="ECO:0007744" key="8">
    <source>
        <dbReference type="PDB" id="6VQ9"/>
    </source>
</evidence>
<evidence type="ECO:0007744" key="9">
    <source>
        <dbReference type="PDB" id="6VQA"/>
    </source>
</evidence>
<evidence type="ECO:0007744" key="10">
    <source>
        <dbReference type="PDB" id="6VQB"/>
    </source>
</evidence>
<evidence type="ECO:0007744" key="11">
    <source>
        <dbReference type="PDB" id="6VQI"/>
    </source>
</evidence>
<evidence type="ECO:0007744" key="12">
    <source>
        <dbReference type="PDB" id="6VQJ"/>
    </source>
</evidence>
<evidence type="ECO:0007744" key="13">
    <source>
        <dbReference type="PDB" id="6VQK"/>
    </source>
</evidence>
<reference key="1">
    <citation type="journal article" date="2004" name="Genome Res.">
        <title>The status, quality, and expansion of the NIH full-length cDNA project: the Mammalian Gene Collection (MGC).</title>
        <authorList>
            <consortium name="The MGC Project Team"/>
        </authorList>
    </citation>
    <scope>NUCLEOTIDE SEQUENCE [LARGE SCALE MRNA]</scope>
    <source>
        <tissue>Pituitary</tissue>
    </source>
</reference>
<reference key="2">
    <citation type="submission" date="2007-07" db="UniProtKB">
        <authorList>
            <person name="Lubec G."/>
            <person name="Chen W.-Q."/>
            <person name="Kang S.U."/>
        </authorList>
    </citation>
    <scope>PROTEIN SEQUENCE OF 53-59; 70-80; 86-99; 112-131; 139-145 AND 192-222</scope>
    <scope>IDENTIFICATION BY MASS SPECTROMETRY</scope>
    <source>
        <strain>Sprague-Dawley</strain>
        <tissue>Brain</tissue>
        <tissue>Hippocampus</tissue>
    </source>
</reference>
<reference evidence="5 6 7 8 9 10 11 12 13" key="3">
    <citation type="journal article" date="2020" name="Science">
        <title>Structure of V-ATPase from the mammalian brain.</title>
        <authorList>
            <person name="Abbas Y.M."/>
            <person name="Wu D."/>
            <person name="Bueler S.A."/>
            <person name="Robinson C.V."/>
            <person name="Rubinstein J.L."/>
        </authorList>
    </citation>
    <scope>STRUCTURE BY ELECTRON MICROSCOPY (3.60 ANGSTROMS)</scope>
    <scope>FUNCTION</scope>
    <scope>IDENTIFICATION IN THE V-ATPASE COMPLEX</scope>
    <scope>SUBCELLULAR LOCATION</scope>
    <scope>IDENTIFICATION BY MASS SPECTROMETRY</scope>
    <scope>TISSUE SPECIFICITY</scope>
</reference>
<keyword id="KW-0002">3D-structure</keyword>
<keyword id="KW-0007">Acetylation</keyword>
<keyword id="KW-1003">Cell membrane</keyword>
<keyword id="KW-0968">Cytoplasmic vesicle</keyword>
<keyword id="KW-0903">Direct protein sequencing</keyword>
<keyword id="KW-0375">Hydrogen ion transport</keyword>
<keyword id="KW-0406">Ion transport</keyword>
<keyword id="KW-0472">Membrane</keyword>
<keyword id="KW-0597">Phosphoprotein</keyword>
<keyword id="KW-1185">Reference proteome</keyword>
<keyword id="KW-0770">Synapse</keyword>
<keyword id="KW-0813">Transport</keyword>
<comment type="function">
    <text evidence="3">Subunit of the V1 complex of vacuolar(H+)-ATPase (V-ATPase), a multisubunit enzyme composed of a peripheral complex (V1) that hydrolyzes ATP and a membrane integral complex (V0) that translocates protons (PubMed:32165585). V-ATPase is responsible for acidifying and maintaining the pH of intracellular compartments and in some cell types, is targeted to the plasma membrane, where it is responsible for acidifying the extracellular environment (PubMed:32165585).</text>
</comment>
<comment type="subunit">
    <text evidence="1 2 3">V-ATPase is a heteromultimeric enzyme made up of two complexes: the ATP-hydrolytic V1 complex and the proton translocation V0 complex (PubMed:32165585). The V1 complex consists of three catalytic AB heterodimers that form a heterohexamer, three peripheral stalks each consisting of EG heterodimers, one central rotor including subunits D and F, and the regulatory subunits C and H (PubMed:32165585). The proton translocation complex V0 consists of the proton transport subunit a, a ring of proteolipid subunits c9c'', rotary subunit d, subunits e and f, and the accessory subunits ATP6AP1/Ac45 and ATP6AP2/PRR (PubMed:32165585). Interacts with RABL2/RABL2A; binds preferentially to GTP-bound RABL2 (By similarity). Interacts with ALDOC (By similarity). Interacts with RAB11B (By similarity).</text>
</comment>
<comment type="subcellular location">
    <subcellularLocation>
        <location evidence="1">Apical cell membrane</location>
    </subcellularLocation>
    <subcellularLocation>
        <location evidence="3">Cytoplasmic vesicle</location>
        <location evidence="3">Secretory vesicle</location>
        <location evidence="3">Synaptic vesicle membrane</location>
        <topology evidence="4">Peripheral membrane protein</topology>
    </subcellularLocation>
    <subcellularLocation>
        <location evidence="3">Cytoplasmic vesicle</location>
        <location evidence="3">Clathrin-coated vesicle membrane</location>
        <topology evidence="4">Peripheral membrane protein</topology>
    </subcellularLocation>
</comment>
<comment type="tissue specificity">
    <text evidence="3">Expressed in brain (at protein level).</text>
</comment>
<comment type="similarity">
    <text evidence="4">Belongs to the V-ATPase E subunit family.</text>
</comment>
<feature type="initiator methionine" description="Removed" evidence="1">
    <location>
        <position position="1"/>
    </location>
</feature>
<feature type="chain" id="PRO_0000282342" description="V-type proton ATPase subunit E 1">
    <location>
        <begin position="2"/>
        <end position="226"/>
    </location>
</feature>
<feature type="modified residue" description="N-acetylalanine" evidence="1">
    <location>
        <position position="2"/>
    </location>
</feature>
<feature type="modified residue" description="Phosphotyrosine" evidence="2">
    <location>
        <position position="56"/>
    </location>
</feature>
<accession>Q6PCU2</accession>